<organism>
    <name type="scientific">Syntrophotalea carbinolica (strain DSM 2380 / NBRC 103641 / GraBd1)</name>
    <name type="common">Pelobacter carbinolicus</name>
    <dbReference type="NCBI Taxonomy" id="338963"/>
    <lineage>
        <taxon>Bacteria</taxon>
        <taxon>Pseudomonadati</taxon>
        <taxon>Thermodesulfobacteriota</taxon>
        <taxon>Desulfuromonadia</taxon>
        <taxon>Desulfuromonadales</taxon>
        <taxon>Syntrophotaleaceae</taxon>
        <taxon>Syntrophotalea</taxon>
    </lineage>
</organism>
<feature type="chain" id="PRO_1000057902" description="Bifunctional purine biosynthesis protein PurH">
    <location>
        <begin position="1"/>
        <end position="521"/>
    </location>
</feature>
<feature type="domain" description="MGS-like" evidence="2">
    <location>
        <begin position="1"/>
        <end position="147"/>
    </location>
</feature>
<protein>
    <recommendedName>
        <fullName evidence="1">Bifunctional purine biosynthesis protein PurH</fullName>
    </recommendedName>
    <domain>
        <recommendedName>
            <fullName evidence="1">Phosphoribosylaminoimidazolecarboxamide formyltransferase</fullName>
            <ecNumber evidence="1">2.1.2.3</ecNumber>
        </recommendedName>
        <alternativeName>
            <fullName evidence="1">AICAR transformylase</fullName>
        </alternativeName>
    </domain>
    <domain>
        <recommendedName>
            <fullName evidence="1">IMP cyclohydrolase</fullName>
            <ecNumber evidence="1">3.5.4.10</ecNumber>
        </recommendedName>
        <alternativeName>
            <fullName evidence="1">ATIC</fullName>
        </alternativeName>
        <alternativeName>
            <fullName evidence="1">IMP synthase</fullName>
        </alternativeName>
        <alternativeName>
            <fullName evidence="1">Inosinicase</fullName>
        </alternativeName>
    </domain>
</protein>
<comment type="catalytic activity">
    <reaction evidence="1">
        <text>(6R)-10-formyltetrahydrofolate + 5-amino-1-(5-phospho-beta-D-ribosyl)imidazole-4-carboxamide = 5-formamido-1-(5-phospho-D-ribosyl)imidazole-4-carboxamide + (6S)-5,6,7,8-tetrahydrofolate</text>
        <dbReference type="Rhea" id="RHEA:22192"/>
        <dbReference type="ChEBI" id="CHEBI:57453"/>
        <dbReference type="ChEBI" id="CHEBI:58467"/>
        <dbReference type="ChEBI" id="CHEBI:58475"/>
        <dbReference type="ChEBI" id="CHEBI:195366"/>
        <dbReference type="EC" id="2.1.2.3"/>
    </reaction>
</comment>
<comment type="catalytic activity">
    <reaction evidence="1">
        <text>IMP + H2O = 5-formamido-1-(5-phospho-D-ribosyl)imidazole-4-carboxamide</text>
        <dbReference type="Rhea" id="RHEA:18445"/>
        <dbReference type="ChEBI" id="CHEBI:15377"/>
        <dbReference type="ChEBI" id="CHEBI:58053"/>
        <dbReference type="ChEBI" id="CHEBI:58467"/>
        <dbReference type="EC" id="3.5.4.10"/>
    </reaction>
</comment>
<comment type="pathway">
    <text evidence="1">Purine metabolism; IMP biosynthesis via de novo pathway; 5-formamido-1-(5-phospho-D-ribosyl)imidazole-4-carboxamide from 5-amino-1-(5-phospho-D-ribosyl)imidazole-4-carboxamide (10-formyl THF route): step 1/1.</text>
</comment>
<comment type="pathway">
    <text evidence="1">Purine metabolism; IMP biosynthesis via de novo pathway; IMP from 5-formamido-1-(5-phospho-D-ribosyl)imidazole-4-carboxamide: step 1/1.</text>
</comment>
<comment type="domain">
    <text evidence="1">The IMP cyclohydrolase activity resides in the N-terminal region.</text>
</comment>
<comment type="similarity">
    <text evidence="1">Belongs to the PurH family.</text>
</comment>
<sequence>MAVIKRALISVSDKTGIVEFARELAGYGVEILSTGGTAALLRQEGLAVKDVSEYTGFPEMLDGRVKTLHPKVHGGLLGMRENPAHVAKMKEHGIEPIDMVVVNLYPFEATVAKPDCTLEDAIENIDIGGPTMLRSAAKNNRDVTVVVDHVDYDQVLAEMKGSGGAVSRGTNFKLAVKVYQHTAAYDGAISNWLGQRMGDELADFSDTLTVQFKKVQDMRYGENPHQKAAFYVERDVQEASISTSRQLQGKELSYNNIADTDAALECVKQFNEGPACVIVKHANPCGVALGSNLLEAYNRAFSTDSESAFGGIIAFNRELDGTTAQAIVERQFVEVIIAPAVSAEAIDVVATKKNVRLLECGYWPQEPGARYDFKRVNGGLLVQDADLLLSGDIKPVTKRVPTEEEMRDLLFTWRVAKFVKSNAIVYGKDGMTIGVGAGQMSRVNSARIAGIKAELAGLEVPGSVMASDAFFPFRDGLDNAAKAGIKAVIQPGGSIRDEEVIAAADEHGIAMVFTGMRHFRH</sequence>
<proteinExistence type="inferred from homology"/>
<name>PUR9_SYNC1</name>
<reference key="1">
    <citation type="submission" date="2005-10" db="EMBL/GenBank/DDBJ databases">
        <title>Complete sequence of Pelobacter carbinolicus DSM 2380.</title>
        <authorList>
            <person name="Copeland A."/>
            <person name="Lucas S."/>
            <person name="Lapidus A."/>
            <person name="Barry K."/>
            <person name="Detter J.C."/>
            <person name="Glavina T."/>
            <person name="Hammon N."/>
            <person name="Israni S."/>
            <person name="Pitluck S."/>
            <person name="Chertkov O."/>
            <person name="Schmutz J."/>
            <person name="Larimer F."/>
            <person name="Land M."/>
            <person name="Kyrpides N."/>
            <person name="Ivanova N."/>
            <person name="Richardson P."/>
        </authorList>
    </citation>
    <scope>NUCLEOTIDE SEQUENCE [LARGE SCALE GENOMIC DNA]</scope>
    <source>
        <strain>DSM 2380 / NBRC 103641 / GraBd1</strain>
    </source>
</reference>
<keyword id="KW-0378">Hydrolase</keyword>
<keyword id="KW-0511">Multifunctional enzyme</keyword>
<keyword id="KW-0658">Purine biosynthesis</keyword>
<keyword id="KW-1185">Reference proteome</keyword>
<keyword id="KW-0808">Transferase</keyword>
<accession>Q3A2D6</accession>
<gene>
    <name evidence="1" type="primary">purH</name>
    <name type="ordered locus">Pcar_2232</name>
</gene>
<evidence type="ECO:0000255" key="1">
    <source>
        <dbReference type="HAMAP-Rule" id="MF_00139"/>
    </source>
</evidence>
<evidence type="ECO:0000255" key="2">
    <source>
        <dbReference type="PROSITE-ProRule" id="PRU01202"/>
    </source>
</evidence>
<dbReference type="EC" id="2.1.2.3" evidence="1"/>
<dbReference type="EC" id="3.5.4.10" evidence="1"/>
<dbReference type="EMBL" id="CP000142">
    <property type="protein sequence ID" value="ABA89471.1"/>
    <property type="molecule type" value="Genomic_DNA"/>
</dbReference>
<dbReference type="RefSeq" id="WP_011341986.1">
    <property type="nucleotide sequence ID" value="NC_007498.2"/>
</dbReference>
<dbReference type="SMR" id="Q3A2D6"/>
<dbReference type="STRING" id="338963.Pcar_2232"/>
<dbReference type="KEGG" id="pca:Pcar_2232"/>
<dbReference type="eggNOG" id="COG0138">
    <property type="taxonomic scope" value="Bacteria"/>
</dbReference>
<dbReference type="HOGENOM" id="CLU_016316_5_2_7"/>
<dbReference type="OrthoDB" id="9802065at2"/>
<dbReference type="UniPathway" id="UPA00074">
    <property type="reaction ID" value="UER00133"/>
</dbReference>
<dbReference type="UniPathway" id="UPA00074">
    <property type="reaction ID" value="UER00135"/>
</dbReference>
<dbReference type="Proteomes" id="UP000002534">
    <property type="component" value="Chromosome"/>
</dbReference>
<dbReference type="GO" id="GO:0005829">
    <property type="term" value="C:cytosol"/>
    <property type="evidence" value="ECO:0007669"/>
    <property type="project" value="TreeGrafter"/>
</dbReference>
<dbReference type="GO" id="GO:0003937">
    <property type="term" value="F:IMP cyclohydrolase activity"/>
    <property type="evidence" value="ECO:0007669"/>
    <property type="project" value="UniProtKB-UniRule"/>
</dbReference>
<dbReference type="GO" id="GO:0004643">
    <property type="term" value="F:phosphoribosylaminoimidazolecarboxamide formyltransferase activity"/>
    <property type="evidence" value="ECO:0007669"/>
    <property type="project" value="UniProtKB-UniRule"/>
</dbReference>
<dbReference type="GO" id="GO:0006189">
    <property type="term" value="P:'de novo' IMP biosynthetic process"/>
    <property type="evidence" value="ECO:0007669"/>
    <property type="project" value="UniProtKB-UniRule"/>
</dbReference>
<dbReference type="CDD" id="cd01421">
    <property type="entry name" value="IMPCH"/>
    <property type="match status" value="1"/>
</dbReference>
<dbReference type="FunFam" id="3.40.140.20:FF:000001">
    <property type="entry name" value="Bifunctional purine biosynthesis protein PurH"/>
    <property type="match status" value="1"/>
</dbReference>
<dbReference type="FunFam" id="3.40.140.20:FF:000002">
    <property type="entry name" value="Bifunctional purine biosynthesis protein PurH"/>
    <property type="match status" value="1"/>
</dbReference>
<dbReference type="FunFam" id="3.40.50.1380:FF:000001">
    <property type="entry name" value="Bifunctional purine biosynthesis protein PurH"/>
    <property type="match status" value="1"/>
</dbReference>
<dbReference type="Gene3D" id="3.40.140.20">
    <property type="match status" value="2"/>
</dbReference>
<dbReference type="Gene3D" id="3.40.50.1380">
    <property type="entry name" value="Methylglyoxal synthase-like domain"/>
    <property type="match status" value="1"/>
</dbReference>
<dbReference type="HAMAP" id="MF_00139">
    <property type="entry name" value="PurH"/>
    <property type="match status" value="1"/>
</dbReference>
<dbReference type="InterPro" id="IPR024051">
    <property type="entry name" value="AICAR_Tfase_dup_dom_sf"/>
</dbReference>
<dbReference type="InterPro" id="IPR016193">
    <property type="entry name" value="Cytidine_deaminase-like"/>
</dbReference>
<dbReference type="InterPro" id="IPR011607">
    <property type="entry name" value="MGS-like_dom"/>
</dbReference>
<dbReference type="InterPro" id="IPR036914">
    <property type="entry name" value="MGS-like_dom_sf"/>
</dbReference>
<dbReference type="InterPro" id="IPR002695">
    <property type="entry name" value="PurH-like"/>
</dbReference>
<dbReference type="NCBIfam" id="NF002049">
    <property type="entry name" value="PRK00881.1"/>
    <property type="match status" value="1"/>
</dbReference>
<dbReference type="NCBIfam" id="TIGR00355">
    <property type="entry name" value="purH"/>
    <property type="match status" value="1"/>
</dbReference>
<dbReference type="PANTHER" id="PTHR11692:SF0">
    <property type="entry name" value="BIFUNCTIONAL PURINE BIOSYNTHESIS PROTEIN ATIC"/>
    <property type="match status" value="1"/>
</dbReference>
<dbReference type="PANTHER" id="PTHR11692">
    <property type="entry name" value="BIFUNCTIONAL PURINE BIOSYNTHESIS PROTEIN PURH"/>
    <property type="match status" value="1"/>
</dbReference>
<dbReference type="Pfam" id="PF01808">
    <property type="entry name" value="AICARFT_IMPCHas"/>
    <property type="match status" value="1"/>
</dbReference>
<dbReference type="Pfam" id="PF02142">
    <property type="entry name" value="MGS"/>
    <property type="match status" value="1"/>
</dbReference>
<dbReference type="PIRSF" id="PIRSF000414">
    <property type="entry name" value="AICARFT_IMPCHas"/>
    <property type="match status" value="1"/>
</dbReference>
<dbReference type="SMART" id="SM00798">
    <property type="entry name" value="AICARFT_IMPCHas"/>
    <property type="match status" value="1"/>
</dbReference>
<dbReference type="SMART" id="SM00851">
    <property type="entry name" value="MGS"/>
    <property type="match status" value="1"/>
</dbReference>
<dbReference type="SUPFAM" id="SSF53927">
    <property type="entry name" value="Cytidine deaminase-like"/>
    <property type="match status" value="1"/>
</dbReference>
<dbReference type="SUPFAM" id="SSF52335">
    <property type="entry name" value="Methylglyoxal synthase-like"/>
    <property type="match status" value="1"/>
</dbReference>
<dbReference type="PROSITE" id="PS51855">
    <property type="entry name" value="MGS"/>
    <property type="match status" value="1"/>
</dbReference>